<reference key="1">
    <citation type="journal article" date="2004" name="Nature">
        <title>Genome evolution in yeasts.</title>
        <authorList>
            <person name="Dujon B."/>
            <person name="Sherman D."/>
            <person name="Fischer G."/>
            <person name="Durrens P."/>
            <person name="Casaregola S."/>
            <person name="Lafontaine I."/>
            <person name="de Montigny J."/>
            <person name="Marck C."/>
            <person name="Neuveglise C."/>
            <person name="Talla E."/>
            <person name="Goffard N."/>
            <person name="Frangeul L."/>
            <person name="Aigle M."/>
            <person name="Anthouard V."/>
            <person name="Babour A."/>
            <person name="Barbe V."/>
            <person name="Barnay S."/>
            <person name="Blanchin S."/>
            <person name="Beckerich J.-M."/>
            <person name="Beyne E."/>
            <person name="Bleykasten C."/>
            <person name="Boisrame A."/>
            <person name="Boyer J."/>
            <person name="Cattolico L."/>
            <person name="Confanioleri F."/>
            <person name="de Daruvar A."/>
            <person name="Despons L."/>
            <person name="Fabre E."/>
            <person name="Fairhead C."/>
            <person name="Ferry-Dumazet H."/>
            <person name="Groppi A."/>
            <person name="Hantraye F."/>
            <person name="Hennequin C."/>
            <person name="Jauniaux N."/>
            <person name="Joyet P."/>
            <person name="Kachouri R."/>
            <person name="Kerrest A."/>
            <person name="Koszul R."/>
            <person name="Lemaire M."/>
            <person name="Lesur I."/>
            <person name="Ma L."/>
            <person name="Muller H."/>
            <person name="Nicaud J.-M."/>
            <person name="Nikolski M."/>
            <person name="Oztas S."/>
            <person name="Ozier-Kalogeropoulos O."/>
            <person name="Pellenz S."/>
            <person name="Potier S."/>
            <person name="Richard G.-F."/>
            <person name="Straub M.-L."/>
            <person name="Suleau A."/>
            <person name="Swennen D."/>
            <person name="Tekaia F."/>
            <person name="Wesolowski-Louvel M."/>
            <person name="Westhof E."/>
            <person name="Wirth B."/>
            <person name="Zeniou-Meyer M."/>
            <person name="Zivanovic Y."/>
            <person name="Bolotin-Fukuhara M."/>
            <person name="Thierry A."/>
            <person name="Bouchier C."/>
            <person name="Caudron B."/>
            <person name="Scarpelli C."/>
            <person name="Gaillardin C."/>
            <person name="Weissenbach J."/>
            <person name="Wincker P."/>
            <person name="Souciet J.-L."/>
        </authorList>
    </citation>
    <scope>NUCLEOTIDE SEQUENCE [LARGE SCALE GENOMIC DNA]</scope>
    <source>
        <strain>ATCC 8585 / CBS 2359 / DSM 70799 / NBRC 1267 / NRRL Y-1140 / WM37</strain>
    </source>
</reference>
<accession>Q6CXJ8</accession>
<dbReference type="EMBL" id="CR382121">
    <property type="protein sequence ID" value="CAH02929.1"/>
    <property type="molecule type" value="Genomic_DNA"/>
</dbReference>
<dbReference type="RefSeq" id="XP_451341.1">
    <property type="nucleotide sequence ID" value="XM_451341.1"/>
</dbReference>
<dbReference type="FunCoup" id="Q6CXJ8">
    <property type="interactions" value="125"/>
</dbReference>
<dbReference type="STRING" id="284590.Q6CXJ8"/>
<dbReference type="GlyCosmos" id="Q6CXJ8">
    <property type="glycosylation" value="1 site, No reported glycans"/>
</dbReference>
<dbReference type="PaxDb" id="284590-Q6CXJ8"/>
<dbReference type="KEGG" id="kla:KLLA0_A07667g"/>
<dbReference type="eggNOG" id="KOG3140">
    <property type="taxonomic scope" value="Eukaryota"/>
</dbReference>
<dbReference type="HOGENOM" id="CLU_041954_1_1_1"/>
<dbReference type="InParanoid" id="Q6CXJ8"/>
<dbReference type="OMA" id="KWQALET"/>
<dbReference type="Proteomes" id="UP000000598">
    <property type="component" value="Chromosome A"/>
</dbReference>
<dbReference type="GO" id="GO:0000139">
    <property type="term" value="C:Golgi membrane"/>
    <property type="evidence" value="ECO:0007669"/>
    <property type="project" value="UniProtKB-SubCell"/>
</dbReference>
<dbReference type="GO" id="GO:0000022">
    <property type="term" value="P:mitotic spindle elongation"/>
    <property type="evidence" value="ECO:0007669"/>
    <property type="project" value="TreeGrafter"/>
</dbReference>
<dbReference type="GO" id="GO:0016192">
    <property type="term" value="P:vesicle-mediated transport"/>
    <property type="evidence" value="ECO:0007669"/>
    <property type="project" value="TreeGrafter"/>
</dbReference>
<dbReference type="InterPro" id="IPR051076">
    <property type="entry name" value="Golgi_membrane_TVP38/TMEM64"/>
</dbReference>
<dbReference type="InterPro" id="IPR032816">
    <property type="entry name" value="VTT_dom"/>
</dbReference>
<dbReference type="PANTHER" id="PTHR47549:SF1">
    <property type="entry name" value="GOLGI APPARATUS MEMBRANE PROTEIN TVP38"/>
    <property type="match status" value="1"/>
</dbReference>
<dbReference type="PANTHER" id="PTHR47549">
    <property type="entry name" value="GOLGI APPARATUS MEMBRANE PROTEIN TVP38-RELATED"/>
    <property type="match status" value="1"/>
</dbReference>
<dbReference type="Pfam" id="PF09335">
    <property type="entry name" value="VTT_dom"/>
    <property type="match status" value="1"/>
</dbReference>
<proteinExistence type="inferred from homology"/>
<protein>
    <recommendedName>
        <fullName>Golgi apparatus membrane protein TVP38</fullName>
    </recommendedName>
</protein>
<gene>
    <name type="primary">TVP38</name>
    <name type="ordered locus">KLLA0A07667g</name>
</gene>
<organism>
    <name type="scientific">Kluyveromyces lactis (strain ATCC 8585 / CBS 2359 / DSM 70799 / NBRC 1267 / NRRL Y-1140 / WM37)</name>
    <name type="common">Yeast</name>
    <name type="synonym">Candida sphaerica</name>
    <dbReference type="NCBI Taxonomy" id="284590"/>
    <lineage>
        <taxon>Eukaryota</taxon>
        <taxon>Fungi</taxon>
        <taxon>Dikarya</taxon>
        <taxon>Ascomycota</taxon>
        <taxon>Saccharomycotina</taxon>
        <taxon>Saccharomycetes</taxon>
        <taxon>Saccharomycetales</taxon>
        <taxon>Saccharomycetaceae</taxon>
        <taxon>Kluyveromyces</taxon>
    </lineage>
</organism>
<keyword id="KW-0325">Glycoprotein</keyword>
<keyword id="KW-0333">Golgi apparatus</keyword>
<keyword id="KW-0472">Membrane</keyword>
<keyword id="KW-1185">Reference proteome</keyword>
<keyword id="KW-0812">Transmembrane</keyword>
<keyword id="KW-1133">Transmembrane helix</keyword>
<evidence type="ECO:0000250" key="1">
    <source>
        <dbReference type="UniProtKB" id="P36164"/>
    </source>
</evidence>
<evidence type="ECO:0000255" key="2"/>
<evidence type="ECO:0000305" key="3"/>
<sequence length="305" mass="34771">MADLYEARVSSGGLSRPSDTDFLDSNDNFDDLDDDFLDIYNLSWRQRIVQHGKRHLRNGKDKFNALSRRKKALVVFLGVLEIILIFITVVKREAIMKGLVDASNDLRQKWYTPLVLMLLILAVSFPPLIGYSFLSLSTGLIYGLSFKGWFILAMSTVIGSVLSFTVFQRLLHSHAERLIRMNPKLEAVSSVLQGNDSYWMIALIRLCPFPYSFINGAIAGIYGISIKNFAIANIITTPKAVIYLFVGERLKNMGETDSGSTRLINFISILLANGFLILTTWFLYYRFKKRYLELQSEQQNSFDIF</sequence>
<feature type="chain" id="PRO_0000343070" description="Golgi apparatus membrane protein TVP38">
    <location>
        <begin position="1"/>
        <end position="305"/>
    </location>
</feature>
<feature type="topological domain" description="Lumenal" evidence="2">
    <location>
        <begin position="1"/>
        <end position="69"/>
    </location>
</feature>
<feature type="transmembrane region" description="Helical" evidence="2">
    <location>
        <begin position="70"/>
        <end position="90"/>
    </location>
</feature>
<feature type="topological domain" description="Cytoplasmic" evidence="2">
    <location>
        <begin position="91"/>
        <end position="113"/>
    </location>
</feature>
<feature type="transmembrane region" description="Helical" evidence="2">
    <location>
        <begin position="114"/>
        <end position="134"/>
    </location>
</feature>
<feature type="topological domain" description="Lumenal" evidence="2">
    <location>
        <begin position="135"/>
        <end position="147"/>
    </location>
</feature>
<feature type="transmembrane region" description="Helical" evidence="2">
    <location>
        <begin position="148"/>
        <end position="168"/>
    </location>
</feature>
<feature type="topological domain" description="Cytoplasmic" evidence="2">
    <location>
        <begin position="169"/>
        <end position="227"/>
    </location>
</feature>
<feature type="transmembrane region" description="Helical" evidence="2">
    <location>
        <begin position="228"/>
        <end position="248"/>
    </location>
</feature>
<feature type="topological domain" description="Lumenal" evidence="2">
    <location>
        <begin position="249"/>
        <end position="262"/>
    </location>
</feature>
<feature type="transmembrane region" description="Helical" evidence="2">
    <location>
        <begin position="263"/>
        <end position="283"/>
    </location>
</feature>
<feature type="topological domain" description="Cytoplasmic" evidence="2">
    <location>
        <begin position="284"/>
        <end position="305"/>
    </location>
</feature>
<feature type="region of interest" description="VTT domain" evidence="1">
    <location>
        <begin position="139"/>
        <end position="250"/>
    </location>
</feature>
<feature type="glycosylation site" description="N-linked (GlcNAc...) asparagine" evidence="2">
    <location>
        <position position="41"/>
    </location>
</feature>
<name>TVP38_KLULA</name>
<comment type="function">
    <text>Golgi membrane protein involved in vesicular trafficking and spindle migration.</text>
</comment>
<comment type="subcellular location">
    <subcellularLocation>
        <location>Golgi apparatus membrane</location>
        <topology>Multi-pass membrane protein</topology>
    </subcellularLocation>
</comment>
<comment type="domain">
    <text evidence="1">The VTT domain was previously called the SNARE-assoc domain. As there is no evidence that this domain associates with SNARE proteins, it was renamed as VMP1, TMEM41, and TVP38 (VTT) domain.</text>
</comment>
<comment type="similarity">
    <text evidence="3">Belongs to the TVP38/TMEM64 family.</text>
</comment>